<comment type="function">
    <text evidence="2 3">Promotes growth and fasciculation of neurites from cultured hippocampal neurons. May be involved in fasciculation as well as myelination of developing neural axons. May have a role in regeneration as well as neural plasticity in the adult nervous system. May mediate homophilic as well as heterophilic cell-cell interaction and contribute to signal transduction through its intracellular domain. Assembled with KCNB1 modulates the gating characteristics of the delayed rectifier voltage-dependent potassium channel KCNB1.</text>
</comment>
<comment type="subunit">
    <text evidence="1 3">Homodimer, and heterodimer with AMIGO2 and AMIGO3. Interacts with KCNB1.</text>
</comment>
<comment type="interaction">
    <interactant intactId="EBI-19125216">
        <id>Q86WK6</id>
    </interactant>
    <interactant intactId="EBI-10827839">
        <id>Q15848</id>
        <label>ADIPOQ</label>
    </interactant>
    <organismsDiffer>false</organismsDiffer>
    <experiments>3</experiments>
</comment>
<comment type="interaction">
    <interactant intactId="EBI-19125216">
        <id>Q86WK6</id>
    </interactant>
    <interactant intactId="EBI-12109402">
        <id>Q86W74-2</id>
        <label>ANKRD46</label>
    </interactant>
    <organismsDiffer>false</organismsDiffer>
    <experiments>3</experiments>
</comment>
<comment type="interaction">
    <interactant intactId="EBI-19125216">
        <id>Q86WK6</id>
    </interactant>
    <interactant intactId="EBI-1172335">
        <id>P07306</id>
        <label>ASGR1</label>
    </interactant>
    <organismsDiffer>false</organismsDiffer>
    <experiments>3</experiments>
</comment>
<comment type="interaction">
    <interactant intactId="EBI-19125216">
        <id>Q86WK6</id>
    </interactant>
    <interactant intactId="EBI-749464">
        <id>Q12983</id>
        <label>BNIP3</label>
    </interactant>
    <organismsDiffer>false</organismsDiffer>
    <experiments>3</experiments>
</comment>
<comment type="interaction">
    <interactant intactId="EBI-19125216">
        <id>Q86WK6</id>
    </interactant>
    <interactant intactId="EBI-12822627">
        <id>O14523</id>
        <label>C2CD2L</label>
    </interactant>
    <organismsDiffer>false</organismsDiffer>
    <experiments>3</experiments>
</comment>
<comment type="interaction">
    <interactant intactId="EBI-19125216">
        <id>Q86WK6</id>
    </interactant>
    <interactant intactId="EBI-12820543">
        <id>O75508</id>
        <label>CLDN11</label>
    </interactant>
    <organismsDiffer>false</organismsDiffer>
    <experiments>3</experiments>
</comment>
<comment type="interaction">
    <interactant intactId="EBI-19125216">
        <id>Q86WK6</id>
    </interactant>
    <interactant intactId="EBI-18341636">
        <id>O95484</id>
        <label>CLDN9</label>
    </interactant>
    <organismsDiffer>false</organismsDiffer>
    <experiments>3</experiments>
</comment>
<comment type="interaction">
    <interactant intactId="EBI-19125216">
        <id>Q86WK6</id>
    </interactant>
    <interactant intactId="EBI-3911467">
        <id>Q07325</id>
        <label>CXCL9</label>
    </interactant>
    <organismsDiffer>false</organismsDiffer>
    <experiments>3</experiments>
</comment>
<comment type="interaction">
    <interactant intactId="EBI-19125216">
        <id>Q86WK6</id>
    </interactant>
    <interactant intactId="EBI-10215665">
        <id>P56851</id>
        <label>EDDM3B</label>
    </interactant>
    <organismsDiffer>false</organismsDiffer>
    <experiments>3</experiments>
</comment>
<comment type="interaction">
    <interactant intactId="EBI-19125216">
        <id>Q86WK6</id>
    </interactant>
    <interactant intactId="EBI-2876774">
        <id>Q92520</id>
        <label>FAM3C</label>
    </interactant>
    <organismsDiffer>false</organismsDiffer>
    <experiments>3</experiments>
</comment>
<comment type="interaction">
    <interactant intactId="EBI-19125216">
        <id>Q86WK6</id>
    </interactant>
    <interactant intactId="EBI-3905204">
        <id>P29033</id>
        <label>GJB2</label>
    </interactant>
    <organismsDiffer>false</organismsDiffer>
    <experiments>3</experiments>
</comment>
<comment type="interaction">
    <interactant intactId="EBI-19125216">
        <id>Q86WK6</id>
    </interactant>
    <interactant intactId="EBI-5916693">
        <id>Q9HCP6</id>
        <label>HHATL</label>
    </interactant>
    <organismsDiffer>false</organismsDiffer>
    <experiments>3</experiments>
</comment>
<comment type="interaction">
    <interactant intactId="EBI-19125216">
        <id>Q86WK6</id>
    </interactant>
    <interactant intactId="EBI-720480">
        <id>P24593</id>
        <label>IGFBP5</label>
    </interactant>
    <organismsDiffer>false</organismsDiffer>
    <experiments>3</experiments>
</comment>
<comment type="interaction">
    <interactant intactId="EBI-19125216">
        <id>Q86WK6</id>
    </interactant>
    <interactant intactId="EBI-11742507">
        <id>Q8TAP4-4</id>
        <label>LMO3</label>
    </interactant>
    <organismsDiffer>false</organismsDiffer>
    <experiments>3</experiments>
</comment>
<comment type="interaction">
    <interactant intactId="EBI-19125216">
        <id>Q86WK6</id>
    </interactant>
    <interactant intactId="EBI-750078">
        <id>Q13021</id>
        <label>MALL</label>
    </interactant>
    <organismsDiffer>false</organismsDiffer>
    <experiments>3</experiments>
</comment>
<comment type="interaction">
    <interactant intactId="EBI-19125216">
        <id>Q86WK6</id>
    </interactant>
    <interactant intactId="EBI-8449636">
        <id>P30301</id>
        <label>MIP</label>
    </interactant>
    <organismsDiffer>false</organismsDiffer>
    <experiments>3</experiments>
</comment>
<comment type="interaction">
    <interactant intactId="EBI-19125216">
        <id>Q86WK6</id>
    </interactant>
    <interactant intactId="EBI-10317425">
        <id>Q9NZG7</id>
        <label>NINJ2</label>
    </interactant>
    <organismsDiffer>false</organismsDiffer>
    <experiments>3</experiments>
</comment>
<comment type="interaction">
    <interactant intactId="EBI-19125216">
        <id>Q86WK6</id>
    </interactant>
    <interactant intactId="EBI-3919611">
        <id>Q16617</id>
        <label>NKG7</label>
    </interactant>
    <organismsDiffer>false</organismsDiffer>
    <experiments>3</experiments>
</comment>
<comment type="interaction">
    <interactant intactId="EBI-19125216">
        <id>Q86WK6</id>
    </interactant>
    <interactant intactId="EBI-12957629">
        <id>P0DJD7</id>
        <label>PGA4</label>
    </interactant>
    <organismsDiffer>false</organismsDiffer>
    <experiments>3</experiments>
</comment>
<comment type="interaction">
    <interactant intactId="EBI-19125216">
        <id>Q86WK6</id>
    </interactant>
    <interactant intactId="EBI-12092917">
        <id>Q9UHJ9-5</id>
        <label>PGAP2</label>
    </interactant>
    <organismsDiffer>false</organismsDiffer>
    <experiments>3</experiments>
</comment>
<comment type="interaction">
    <interactant intactId="EBI-19125216">
        <id>Q86WK6</id>
    </interactant>
    <interactant intactId="EBI-11721828">
        <id>Q8IY26</id>
        <label>PLPP6</label>
    </interactant>
    <organismsDiffer>false</organismsDiffer>
    <experiments>3</experiments>
</comment>
<comment type="interaction">
    <interactant intactId="EBI-19125216">
        <id>Q86WK6</id>
    </interactant>
    <interactant intactId="EBI-18210782">
        <id>Q8N271</id>
        <label>PROM2</label>
    </interactant>
    <organismsDiffer>false</organismsDiffer>
    <experiments>3</experiments>
</comment>
<comment type="interaction">
    <interactant intactId="EBI-19125216">
        <id>Q86WK6</id>
    </interactant>
    <interactant intactId="EBI-3906138">
        <id>P53801</id>
        <label>PTTG1IP</label>
    </interactant>
    <organismsDiffer>false</organismsDiffer>
    <experiments>3</experiments>
</comment>
<comment type="interaction">
    <interactant intactId="EBI-19125216">
        <id>Q86WK6</id>
    </interactant>
    <interactant intactId="EBI-1052363">
        <id>Q9NS64</id>
        <label>RPRM</label>
    </interactant>
    <organismsDiffer>false</organismsDiffer>
    <experiments>3</experiments>
</comment>
<comment type="interaction">
    <interactant intactId="EBI-19125216">
        <id>Q86WK6</id>
    </interactant>
    <interactant intactId="EBI-9679163">
        <id>Q9Y6D0</id>
        <label>SELENOK</label>
    </interactant>
    <organismsDiffer>false</organismsDiffer>
    <experiments>3</experiments>
</comment>
<comment type="interaction">
    <interactant intactId="EBI-19125216">
        <id>Q86WK6</id>
    </interactant>
    <interactant intactId="EBI-9978441">
        <id>Q9H2H9</id>
        <label>SLC38A1</label>
    </interactant>
    <organismsDiffer>false</organismsDiffer>
    <experiments>3</experiments>
</comment>
<comment type="interaction">
    <interactant intactId="EBI-19125216">
        <id>Q86WK6</id>
    </interactant>
    <interactant intactId="EBI-10314552">
        <id>Q9NVC3</id>
        <label>SLC38A7</label>
    </interactant>
    <organismsDiffer>false</organismsDiffer>
    <experiments>3</experiments>
</comment>
<comment type="interaction">
    <interactant intactId="EBI-19125216">
        <id>Q86WK6</id>
    </interactant>
    <interactant intactId="EBI-12266234">
        <id>Q8IVJ1</id>
        <label>SLC41A1</label>
    </interactant>
    <organismsDiffer>false</organismsDiffer>
    <experiments>3</experiments>
</comment>
<comment type="interaction">
    <interactant intactId="EBI-19125216">
        <id>Q86WK6</id>
    </interactant>
    <interactant intactId="EBI-10290130">
        <id>Q96JW4</id>
        <label>SLC41A2</label>
    </interactant>
    <organismsDiffer>false</organismsDiffer>
    <experiments>3</experiments>
</comment>
<comment type="interaction">
    <interactant intactId="EBI-19125216">
        <id>Q86WK6</id>
    </interactant>
    <interactant intactId="EBI-727240">
        <id>Q9UNK0</id>
        <label>STX8</label>
    </interactant>
    <organismsDiffer>false</organismsDiffer>
    <experiments>3</experiments>
</comment>
<comment type="interaction">
    <interactant intactId="EBI-19125216">
        <id>Q86WK6</id>
    </interactant>
    <interactant intactId="EBI-19125949">
        <id>O14894</id>
        <label>TM4SF5</label>
    </interactant>
    <organismsDiffer>false</organismsDiffer>
    <experiments>3</experiments>
</comment>
<comment type="interaction">
    <interactant intactId="EBI-19125216">
        <id>Q86WK6</id>
    </interactant>
    <interactant intactId="EBI-12366453">
        <id>P56557</id>
        <label>TMEM50B</label>
    </interactant>
    <organismsDiffer>false</organismsDiffer>
    <experiments>3</experiments>
</comment>
<comment type="interaction">
    <interactant intactId="EBI-19125216">
        <id>Q86WK6</id>
    </interactant>
    <interactant intactId="EBI-2852148">
        <id>Q9H2L4</id>
        <label>TMEM60</label>
    </interactant>
    <organismsDiffer>false</organismsDiffer>
    <experiments>3</experiments>
</comment>
<comment type="interaction">
    <interactant intactId="EBI-19125216">
        <id>Q86WK6</id>
    </interactant>
    <interactant intactId="EBI-8649725">
        <id>Q9BSE2</id>
        <label>TMEM79</label>
    </interactant>
    <organismsDiffer>false</organismsDiffer>
    <experiments>3</experiments>
</comment>
<comment type="interaction">
    <interactant intactId="EBI-19125216">
        <id>Q86WK6</id>
    </interactant>
    <interactant intactId="EBI-12003398">
        <id>Q9H2S6-2</id>
        <label>TNMD</label>
    </interactant>
    <organismsDiffer>false</organismsDiffer>
    <experiments>3</experiments>
</comment>
<comment type="interaction">
    <interactant intactId="EBI-19125216">
        <id>Q86WK6</id>
    </interactant>
    <interactant intactId="EBI-6623146">
        <id>P30536</id>
        <label>TSPO</label>
    </interactant>
    <organismsDiffer>false</organismsDiffer>
    <experiments>3</experiments>
</comment>
<comment type="interaction">
    <interactant intactId="EBI-19125216">
        <id>Q86WK6</id>
    </interactant>
    <interactant intactId="EBI-10243654">
        <id>Q5BVD1</id>
        <label>TTMP</label>
    </interactant>
    <organismsDiffer>false</organismsDiffer>
    <experiments>3</experiments>
</comment>
<comment type="interaction">
    <interactant intactId="EBI-19125216">
        <id>Q86WK6</id>
    </interactant>
    <interactant intactId="EBI-10179682">
        <id>O00526</id>
        <label>UPK2</label>
    </interactant>
    <organismsDiffer>false</organismsDiffer>
    <experiments>3</experiments>
</comment>
<comment type="subcellular location">
    <subcellularLocation>
        <location evidence="3">Cell membrane</location>
        <topology evidence="3">Single-pass type I membrane protein</topology>
    </subcellularLocation>
    <subcellularLocation>
        <location evidence="3">Perikaryon</location>
    </subcellularLocation>
    <subcellularLocation>
        <location evidence="3">Cell projection</location>
        <location evidence="3">Dendrite</location>
    </subcellularLocation>
    <subcellularLocation>
        <location evidence="2">Cell projection</location>
        <location evidence="2">Axon</location>
    </subcellularLocation>
    <text evidence="2 3">Colocalizes with KCNB1 at high-density somatodendritic clusters on the surface of hippocampal and cortical neurons. Associated with axons of neuronal cells.</text>
</comment>
<comment type="domain">
    <text evidence="1">The LRR repeat region mediates homodimerization.</text>
</comment>
<comment type="similarity">
    <text evidence="9">Belongs to the immunoglobulin superfamily. AMIGO family.</text>
</comment>
<organism>
    <name type="scientific">Homo sapiens</name>
    <name type="common">Human</name>
    <dbReference type="NCBI Taxonomy" id="9606"/>
    <lineage>
        <taxon>Eukaryota</taxon>
        <taxon>Metazoa</taxon>
        <taxon>Chordata</taxon>
        <taxon>Craniata</taxon>
        <taxon>Vertebrata</taxon>
        <taxon>Euteleostomi</taxon>
        <taxon>Mammalia</taxon>
        <taxon>Eutheria</taxon>
        <taxon>Euarchontoglires</taxon>
        <taxon>Primates</taxon>
        <taxon>Haplorrhini</taxon>
        <taxon>Catarrhini</taxon>
        <taxon>Hominidae</taxon>
        <taxon>Homo</taxon>
    </lineage>
</organism>
<dbReference type="EMBL" id="AY237007">
    <property type="protein sequence ID" value="AAO48948.1"/>
    <property type="molecule type" value="mRNA"/>
</dbReference>
<dbReference type="EMBL" id="AK295678">
    <property type="protein sequence ID" value="BAG58535.1"/>
    <property type="molecule type" value="mRNA"/>
</dbReference>
<dbReference type="EMBL" id="AL355145">
    <property type="status" value="NOT_ANNOTATED_CDS"/>
    <property type="molecule type" value="Genomic_DNA"/>
</dbReference>
<dbReference type="EMBL" id="BC040879">
    <property type="protein sequence ID" value="AAH40879.1"/>
    <property type="molecule type" value="mRNA"/>
</dbReference>
<dbReference type="EMBL" id="AB032989">
    <property type="protein sequence ID" value="BAA86477.1"/>
    <property type="molecule type" value="mRNA"/>
</dbReference>
<dbReference type="CCDS" id="CCDS30795.1"/>
<dbReference type="RefSeq" id="NP_065754.2">
    <property type="nucleotide sequence ID" value="NM_020703.4"/>
</dbReference>
<dbReference type="RefSeq" id="XP_011540114.1">
    <property type="nucleotide sequence ID" value="XM_011541812.3"/>
</dbReference>
<dbReference type="RefSeq" id="XP_054193791.1">
    <property type="nucleotide sequence ID" value="XM_054337816.1"/>
</dbReference>
<dbReference type="SMR" id="Q86WK6"/>
<dbReference type="BioGRID" id="121533">
    <property type="interactions" value="148"/>
</dbReference>
<dbReference type="FunCoup" id="Q86WK6">
    <property type="interactions" value="432"/>
</dbReference>
<dbReference type="IntAct" id="Q86WK6">
    <property type="interactions" value="89"/>
</dbReference>
<dbReference type="STRING" id="9606.ENSP00000358880"/>
<dbReference type="TCDB" id="8.A.43.1.10">
    <property type="family name" value="the neat-domain containing methaemoglobin heme sequestration (n-mhs) family"/>
</dbReference>
<dbReference type="GlyCosmos" id="Q86WK6">
    <property type="glycosylation" value="5 sites, No reported glycans"/>
</dbReference>
<dbReference type="GlyGen" id="Q86WK6">
    <property type="glycosylation" value="6 sites, 1 N-linked glycan (3 sites), 1 O-linked glycan (1 site)"/>
</dbReference>
<dbReference type="iPTMnet" id="Q86WK6"/>
<dbReference type="PhosphoSitePlus" id="Q86WK6"/>
<dbReference type="SwissPalm" id="Q86WK6"/>
<dbReference type="BioMuta" id="AMIGO1"/>
<dbReference type="DMDM" id="68052342"/>
<dbReference type="MassIVE" id="Q86WK6"/>
<dbReference type="PaxDb" id="9606-ENSP00000358880"/>
<dbReference type="PeptideAtlas" id="Q86WK6"/>
<dbReference type="ProteomicsDB" id="70178"/>
<dbReference type="ABCD" id="Q86WK6">
    <property type="antibodies" value="4 sequenced antibodies"/>
</dbReference>
<dbReference type="Antibodypedia" id="53745">
    <property type="antibodies" value="326 antibodies from 35 providers"/>
</dbReference>
<dbReference type="DNASU" id="57463"/>
<dbReference type="Ensembl" id="ENST00000369862.1">
    <property type="protein sequence ID" value="ENSP00000358878.1"/>
    <property type="gene ID" value="ENSG00000181754.7"/>
</dbReference>
<dbReference type="Ensembl" id="ENST00000369864.5">
    <property type="protein sequence ID" value="ENSP00000358880.4"/>
    <property type="gene ID" value="ENSG00000181754.7"/>
</dbReference>
<dbReference type="GeneID" id="57463"/>
<dbReference type="KEGG" id="hsa:57463"/>
<dbReference type="MANE-Select" id="ENST00000369864.5">
    <property type="protein sequence ID" value="ENSP00000358880.4"/>
    <property type="RefSeq nucleotide sequence ID" value="NM_020703.4"/>
    <property type="RefSeq protein sequence ID" value="NP_065754.2"/>
</dbReference>
<dbReference type="UCSC" id="uc001dxx.5">
    <property type="organism name" value="human"/>
</dbReference>
<dbReference type="AGR" id="HGNC:20824"/>
<dbReference type="CTD" id="57463"/>
<dbReference type="DisGeNET" id="57463"/>
<dbReference type="GeneCards" id="AMIGO1"/>
<dbReference type="HGNC" id="HGNC:20824">
    <property type="gene designation" value="AMIGO1"/>
</dbReference>
<dbReference type="HPA" id="ENSG00000181754">
    <property type="expression patterns" value="Low tissue specificity"/>
</dbReference>
<dbReference type="MIM" id="615689">
    <property type="type" value="gene"/>
</dbReference>
<dbReference type="neXtProt" id="NX_Q86WK6"/>
<dbReference type="OpenTargets" id="ENSG00000181754"/>
<dbReference type="PharmGKB" id="PA142672625"/>
<dbReference type="VEuPathDB" id="HostDB:ENSG00000181754"/>
<dbReference type="eggNOG" id="ENOG502QVUQ">
    <property type="taxonomic scope" value="Eukaryota"/>
</dbReference>
<dbReference type="GeneTree" id="ENSGT00950000183146"/>
<dbReference type="HOGENOM" id="CLU_030478_0_0_1"/>
<dbReference type="InParanoid" id="Q86WK6"/>
<dbReference type="OMA" id="VFSDTPM"/>
<dbReference type="OrthoDB" id="676979at2759"/>
<dbReference type="PAN-GO" id="Q86WK6">
    <property type="GO annotations" value="2 GO annotations based on evolutionary models"/>
</dbReference>
<dbReference type="PhylomeDB" id="Q86WK6"/>
<dbReference type="TreeFam" id="TF326838"/>
<dbReference type="PathwayCommons" id="Q86WK6"/>
<dbReference type="SignaLink" id="Q86WK6"/>
<dbReference type="BioGRID-ORCS" id="57463">
    <property type="hits" value="27 hits in 1146 CRISPR screens"/>
</dbReference>
<dbReference type="ChiTaRS" id="AMIGO1">
    <property type="organism name" value="human"/>
</dbReference>
<dbReference type="GenomeRNAi" id="57463"/>
<dbReference type="Pharos" id="Q86WK6">
    <property type="development level" value="Tbio"/>
</dbReference>
<dbReference type="PRO" id="PR:Q86WK6"/>
<dbReference type="Proteomes" id="UP000005640">
    <property type="component" value="Chromosome 1"/>
</dbReference>
<dbReference type="RNAct" id="Q86WK6">
    <property type="molecule type" value="protein"/>
</dbReference>
<dbReference type="Bgee" id="ENSG00000181754">
    <property type="expression patterns" value="Expressed in middle temporal gyrus and 162 other cell types or tissues"/>
</dbReference>
<dbReference type="GO" id="GO:0030425">
    <property type="term" value="C:dendrite"/>
    <property type="evidence" value="ECO:0000250"/>
    <property type="project" value="UniProtKB"/>
</dbReference>
<dbReference type="GO" id="GO:0016020">
    <property type="term" value="C:membrane"/>
    <property type="evidence" value="ECO:0000318"/>
    <property type="project" value="GO_Central"/>
</dbReference>
<dbReference type="GO" id="GO:0032809">
    <property type="term" value="C:neuronal cell body membrane"/>
    <property type="evidence" value="ECO:0000250"/>
    <property type="project" value="UniProtKB"/>
</dbReference>
<dbReference type="GO" id="GO:1990030">
    <property type="term" value="C:pericellular basket"/>
    <property type="evidence" value="ECO:0007669"/>
    <property type="project" value="Ensembl"/>
</dbReference>
<dbReference type="GO" id="GO:0043204">
    <property type="term" value="C:perikaryon"/>
    <property type="evidence" value="ECO:0007669"/>
    <property type="project" value="UniProtKB-SubCell"/>
</dbReference>
<dbReference type="GO" id="GO:0008076">
    <property type="term" value="C:voltage-gated potassium channel complex"/>
    <property type="evidence" value="ECO:0007669"/>
    <property type="project" value="Ensembl"/>
</dbReference>
<dbReference type="GO" id="GO:0015459">
    <property type="term" value="F:potassium channel regulator activity"/>
    <property type="evidence" value="ECO:0000250"/>
    <property type="project" value="UniProtKB"/>
</dbReference>
<dbReference type="GO" id="GO:0007413">
    <property type="term" value="P:axonal fasciculation"/>
    <property type="evidence" value="ECO:0000250"/>
    <property type="project" value="UniProtKB"/>
</dbReference>
<dbReference type="GO" id="GO:0007409">
    <property type="term" value="P:axonogenesis"/>
    <property type="evidence" value="ECO:0007669"/>
    <property type="project" value="Ensembl"/>
</dbReference>
<dbReference type="GO" id="GO:0007420">
    <property type="term" value="P:brain development"/>
    <property type="evidence" value="ECO:0000318"/>
    <property type="project" value="GO_Central"/>
</dbReference>
<dbReference type="GO" id="GO:1905232">
    <property type="term" value="P:cellular response to L-glutamate"/>
    <property type="evidence" value="ECO:0007669"/>
    <property type="project" value="Ensembl"/>
</dbReference>
<dbReference type="GO" id="GO:0007157">
    <property type="term" value="P:heterophilic cell-cell adhesion via plasma membrane cell adhesion molecules"/>
    <property type="evidence" value="ECO:0000250"/>
    <property type="project" value="UniProtKB"/>
</dbReference>
<dbReference type="GO" id="GO:0007156">
    <property type="term" value="P:homophilic cell adhesion via plasma membrane adhesion molecules"/>
    <property type="evidence" value="ECO:0000250"/>
    <property type="project" value="UniProtKB"/>
</dbReference>
<dbReference type="GO" id="GO:0042552">
    <property type="term" value="P:myelination"/>
    <property type="evidence" value="ECO:0000250"/>
    <property type="project" value="UniProtKB"/>
</dbReference>
<dbReference type="GO" id="GO:0050772">
    <property type="term" value="P:positive regulation of axonogenesis"/>
    <property type="evidence" value="ECO:0000250"/>
    <property type="project" value="UniProtKB"/>
</dbReference>
<dbReference type="GO" id="GO:0010976">
    <property type="term" value="P:positive regulation of neuron projection development"/>
    <property type="evidence" value="ECO:0007669"/>
    <property type="project" value="Ensembl"/>
</dbReference>
<dbReference type="GO" id="GO:1901381">
    <property type="term" value="P:positive regulation of potassium ion transmembrane transport"/>
    <property type="evidence" value="ECO:0000250"/>
    <property type="project" value="UniProtKB"/>
</dbReference>
<dbReference type="GO" id="GO:0051965">
    <property type="term" value="P:positive regulation of synapse assembly"/>
    <property type="evidence" value="ECO:0000318"/>
    <property type="project" value="GO_Central"/>
</dbReference>
<dbReference type="FunFam" id="3.80.10.10:FF:000181">
    <property type="entry name" value="amphoterin-induced protein 1 isoform X1"/>
    <property type="match status" value="1"/>
</dbReference>
<dbReference type="FunFam" id="2.60.40.10:FF:001123">
    <property type="entry name" value="Amphoterin-induced protein 1 isoform X2"/>
    <property type="match status" value="1"/>
</dbReference>
<dbReference type="Gene3D" id="2.60.40.10">
    <property type="entry name" value="Immunoglobulins"/>
    <property type="match status" value="1"/>
</dbReference>
<dbReference type="Gene3D" id="3.80.10.10">
    <property type="entry name" value="Ribonuclease Inhibitor"/>
    <property type="match status" value="1"/>
</dbReference>
<dbReference type="InterPro" id="IPR031283">
    <property type="entry name" value="AMIGO"/>
</dbReference>
<dbReference type="InterPro" id="IPR000483">
    <property type="entry name" value="Cys-rich_flank_reg_C"/>
</dbReference>
<dbReference type="InterPro" id="IPR007110">
    <property type="entry name" value="Ig-like_dom"/>
</dbReference>
<dbReference type="InterPro" id="IPR036179">
    <property type="entry name" value="Ig-like_dom_sf"/>
</dbReference>
<dbReference type="InterPro" id="IPR013783">
    <property type="entry name" value="Ig-like_fold"/>
</dbReference>
<dbReference type="InterPro" id="IPR013098">
    <property type="entry name" value="Ig_I-set"/>
</dbReference>
<dbReference type="InterPro" id="IPR003599">
    <property type="entry name" value="Ig_sub"/>
</dbReference>
<dbReference type="InterPro" id="IPR001611">
    <property type="entry name" value="Leu-rich_rpt"/>
</dbReference>
<dbReference type="InterPro" id="IPR003591">
    <property type="entry name" value="Leu-rich_rpt_typical-subtyp"/>
</dbReference>
<dbReference type="InterPro" id="IPR032675">
    <property type="entry name" value="LRR_dom_sf"/>
</dbReference>
<dbReference type="PANTHER" id="PTHR24368">
    <property type="entry name" value="AMPHOTERIN-INDUCED PROTEIN"/>
    <property type="match status" value="1"/>
</dbReference>
<dbReference type="PANTHER" id="PTHR24368:SF1">
    <property type="entry name" value="AMPHOTERIN-INDUCED PROTEIN 1"/>
    <property type="match status" value="1"/>
</dbReference>
<dbReference type="Pfam" id="PF07679">
    <property type="entry name" value="I-set"/>
    <property type="match status" value="1"/>
</dbReference>
<dbReference type="Pfam" id="PF00560">
    <property type="entry name" value="LRR_1"/>
    <property type="match status" value="1"/>
</dbReference>
<dbReference type="Pfam" id="PF13855">
    <property type="entry name" value="LRR_8"/>
    <property type="match status" value="1"/>
</dbReference>
<dbReference type="PRINTS" id="PR00019">
    <property type="entry name" value="LEURICHRPT"/>
</dbReference>
<dbReference type="SMART" id="SM00409">
    <property type="entry name" value="IG"/>
    <property type="match status" value="1"/>
</dbReference>
<dbReference type="SMART" id="SM00369">
    <property type="entry name" value="LRR_TYP"/>
    <property type="match status" value="5"/>
</dbReference>
<dbReference type="SMART" id="SM00082">
    <property type="entry name" value="LRRCT"/>
    <property type="match status" value="1"/>
</dbReference>
<dbReference type="SUPFAM" id="SSF48726">
    <property type="entry name" value="Immunoglobulin"/>
    <property type="match status" value="1"/>
</dbReference>
<dbReference type="SUPFAM" id="SSF52058">
    <property type="entry name" value="L domain-like"/>
    <property type="match status" value="1"/>
</dbReference>
<dbReference type="PROSITE" id="PS50835">
    <property type="entry name" value="IG_LIKE"/>
    <property type="match status" value="1"/>
</dbReference>
<dbReference type="PROSITE" id="PS51450">
    <property type="entry name" value="LRR"/>
    <property type="match status" value="6"/>
</dbReference>
<evidence type="ECO:0000250" key="1"/>
<evidence type="ECO:0000250" key="2">
    <source>
        <dbReference type="UniProtKB" id="Q80ZD7"/>
    </source>
</evidence>
<evidence type="ECO:0000250" key="3">
    <source>
        <dbReference type="UniProtKB" id="Q80ZD8"/>
    </source>
</evidence>
<evidence type="ECO:0000255" key="4"/>
<evidence type="ECO:0000255" key="5">
    <source>
        <dbReference type="PROSITE-ProRule" id="PRU00114"/>
    </source>
</evidence>
<evidence type="ECO:0000256" key="6">
    <source>
        <dbReference type="SAM" id="MobiDB-lite"/>
    </source>
</evidence>
<evidence type="ECO:0000269" key="7">
    <source>
    </source>
</evidence>
<evidence type="ECO:0000303" key="8">
    <source>
    </source>
</evidence>
<evidence type="ECO:0000305" key="9"/>
<evidence type="ECO:0000312" key="10">
    <source>
        <dbReference type="EMBL" id="AAH40879.1"/>
    </source>
</evidence>
<evidence type="ECO:0000312" key="11">
    <source>
        <dbReference type="EMBL" id="AAO48948.1"/>
    </source>
</evidence>
<evidence type="ECO:0000312" key="12">
    <source>
        <dbReference type="EMBL" id="BAA86477.1"/>
    </source>
</evidence>
<evidence type="ECO:0000312" key="13">
    <source>
        <dbReference type="HGNC" id="HGNC:20824"/>
    </source>
</evidence>
<evidence type="ECO:0007744" key="14">
    <source>
    </source>
</evidence>
<name>AMGO1_HUMAN</name>
<protein>
    <recommendedName>
        <fullName>Amphoterin-induced protein 1</fullName>
    </recommendedName>
    <alternativeName>
        <fullName>AMIGO-1</fullName>
    </alternativeName>
    <alternativeName>
        <fullName>Alivin-2</fullName>
    </alternativeName>
</protein>
<proteinExistence type="evidence at protein level"/>
<feature type="signal peptide" evidence="4">
    <location>
        <begin position="1"/>
        <end position="27"/>
    </location>
</feature>
<feature type="chain" id="PRO_0000014506" description="Amphoterin-induced protein 1" evidence="4">
    <location>
        <begin position="28"/>
        <end position="493"/>
    </location>
</feature>
<feature type="topological domain" description="Extracellular" evidence="4">
    <location>
        <begin position="28"/>
        <end position="372"/>
    </location>
</feature>
<feature type="transmembrane region" description="Helical" evidence="4">
    <location>
        <begin position="373"/>
        <end position="393"/>
    </location>
</feature>
<feature type="topological domain" description="Cytoplasmic" evidence="4">
    <location>
        <begin position="394"/>
        <end position="493"/>
    </location>
</feature>
<feature type="domain" description="LRRNT">
    <location>
        <begin position="28"/>
        <end position="61"/>
    </location>
</feature>
<feature type="repeat" description="LRR 1">
    <location>
        <begin position="62"/>
        <end position="83"/>
    </location>
</feature>
<feature type="repeat" description="LRR 2">
    <location>
        <begin position="87"/>
        <end position="108"/>
    </location>
</feature>
<feature type="repeat" description="LRR 3">
    <location>
        <begin position="111"/>
        <end position="132"/>
    </location>
</feature>
<feature type="repeat" description="LRR 4">
    <location>
        <begin position="135"/>
        <end position="156"/>
    </location>
</feature>
<feature type="repeat" description="LRR 5">
    <location>
        <begin position="159"/>
        <end position="179"/>
    </location>
</feature>
<feature type="repeat" description="LRR 6">
    <location>
        <begin position="186"/>
        <end position="206"/>
    </location>
</feature>
<feature type="domain" description="LRRCT">
    <location>
        <begin position="221"/>
        <end position="272"/>
    </location>
</feature>
<feature type="domain" description="Ig-like C2-type" evidence="4">
    <location>
        <begin position="269"/>
        <end position="353"/>
    </location>
</feature>
<feature type="region of interest" description="Disordered" evidence="6">
    <location>
        <begin position="405"/>
        <end position="493"/>
    </location>
</feature>
<feature type="compositionally biased region" description="Polar residues" evidence="6">
    <location>
        <begin position="408"/>
        <end position="424"/>
    </location>
</feature>
<feature type="compositionally biased region" description="Basic and acidic residues" evidence="6">
    <location>
        <begin position="431"/>
        <end position="442"/>
    </location>
</feature>
<feature type="modified residue" description="Phosphoserine" evidence="14">
    <location>
        <position position="477"/>
    </location>
</feature>
<feature type="modified residue" description="Phosphoserine" evidence="3">
    <location>
        <position position="481"/>
    </location>
</feature>
<feature type="glycosylation site" description="N-linked (GlcNAc...) asparagine" evidence="4">
    <location>
        <position position="72"/>
    </location>
</feature>
<feature type="glycosylation site" description="N-linked (GlcNAc...) asparagine" evidence="4">
    <location>
        <position position="264"/>
    </location>
</feature>
<feature type="glycosylation site" description="N-linked (GlcNAc...) asparagine" evidence="4">
    <location>
        <position position="315"/>
    </location>
</feature>
<feature type="glycosylation site" description="N-linked (GlcNAc...) asparagine" evidence="4">
    <location>
        <position position="349"/>
    </location>
</feature>
<feature type="glycosylation site" description="N-linked (GlcNAc...) asparagine" evidence="4">
    <location>
        <position position="360"/>
    </location>
</feature>
<feature type="disulfide bond" evidence="5">
    <location>
        <begin position="34"/>
        <end position="40"/>
    </location>
</feature>
<feature type="disulfide bond" evidence="5">
    <location>
        <begin position="38"/>
        <end position="47"/>
    </location>
</feature>
<feature type="disulfide bond" evidence="5">
    <location>
        <begin position="225"/>
        <end position="253"/>
    </location>
</feature>
<feature type="disulfide bond" evidence="5">
    <location>
        <begin position="227"/>
        <end position="270"/>
    </location>
</feature>
<feature type="disulfide bond" evidence="5">
    <location>
        <begin position="290"/>
        <end position="341"/>
    </location>
</feature>
<feature type="sequence conflict" description="In Ref. 4; AAH40879." evidence="9" ref="4">
    <original>N</original>
    <variation>S</variation>
    <location>
        <position position="454"/>
    </location>
</feature>
<accession>Q86WK6</accession>
<accession>B4DIM3</accession>
<accession>Q8IW71</accession>
<accession>Q9ULQ7</accession>
<sequence length="493" mass="55239">MHPHRDPRGLWLLLPSLSLLLFEVARAGRAVVSCPAACLCASNILSCSKQQLPNVPHSLPSYTALLDLSHNNLSRLRAEWTPTRLTQLHSLLLSHNHLNFISSEAFSPVPNLRYLDLSSNQLRTLDEFLFSDLQVLEVLLLYNNHIMAVDRCAFDDMAQLQKLYLSQNQISRFPLELVKEGAKLPKLTLLDLSSNKLKNLPLPDLQKLPAWIKNGLYLHNNPLNCDCELYQLFSHWQYRQLSSVMDFQEDLYCMNSKKLHNVFNLSFLNCGEYKERAWEAHLGDTLIIKCDTKQQGMTKVWVTPSNERVLDEVTNGTVSVSKDGSLLFQQVQVEDGGVYTCYAMGETFNETLSVELKVHNFTLHGHHDTLNTAYTTLVGCILSVVLVLIYLYLTPCRCWCRGVEKPSSHQGDSLSSSMLSTTPNHDPMAGGDKDDGFDRRVAFLEPAGPGQGQNGKLKPGNTLPVPEATGKGQRRMSDPESVSSVFSDTPIVV</sequence>
<reference evidence="11" key="1">
    <citation type="journal article" date="2003" name="J. Cell Biol.">
        <title>AMIGO, a transmembrane protein implicated in axon tract development, defines a novel protein family with leucine-rich repeats.</title>
        <authorList>
            <person name="Kuja-Panula J."/>
            <person name="Kiiltomaeki M."/>
            <person name="Yamashiro T."/>
            <person name="Rouhiainen A."/>
            <person name="Rauvala H."/>
        </authorList>
    </citation>
    <scope>NUCLEOTIDE SEQUENCE [MRNA]</scope>
    <source>
        <tissue evidence="7">Monocytic leukemia</tissue>
    </source>
</reference>
<reference key="2">
    <citation type="journal article" date="2004" name="Nat. Genet.">
        <title>Complete sequencing and characterization of 21,243 full-length human cDNAs.</title>
        <authorList>
            <person name="Ota T."/>
            <person name="Suzuki Y."/>
            <person name="Nishikawa T."/>
            <person name="Otsuki T."/>
            <person name="Sugiyama T."/>
            <person name="Irie R."/>
            <person name="Wakamatsu A."/>
            <person name="Hayashi K."/>
            <person name="Sato H."/>
            <person name="Nagai K."/>
            <person name="Kimura K."/>
            <person name="Makita H."/>
            <person name="Sekine M."/>
            <person name="Obayashi M."/>
            <person name="Nishi T."/>
            <person name="Shibahara T."/>
            <person name="Tanaka T."/>
            <person name="Ishii S."/>
            <person name="Yamamoto J."/>
            <person name="Saito K."/>
            <person name="Kawai Y."/>
            <person name="Isono Y."/>
            <person name="Nakamura Y."/>
            <person name="Nagahari K."/>
            <person name="Murakami K."/>
            <person name="Yasuda T."/>
            <person name="Iwayanagi T."/>
            <person name="Wagatsuma M."/>
            <person name="Shiratori A."/>
            <person name="Sudo H."/>
            <person name="Hosoiri T."/>
            <person name="Kaku Y."/>
            <person name="Kodaira H."/>
            <person name="Kondo H."/>
            <person name="Sugawara M."/>
            <person name="Takahashi M."/>
            <person name="Kanda K."/>
            <person name="Yokoi T."/>
            <person name="Furuya T."/>
            <person name="Kikkawa E."/>
            <person name="Omura Y."/>
            <person name="Abe K."/>
            <person name="Kamihara K."/>
            <person name="Katsuta N."/>
            <person name="Sato K."/>
            <person name="Tanikawa M."/>
            <person name="Yamazaki M."/>
            <person name="Ninomiya K."/>
            <person name="Ishibashi T."/>
            <person name="Yamashita H."/>
            <person name="Murakawa K."/>
            <person name="Fujimori K."/>
            <person name="Tanai H."/>
            <person name="Kimata M."/>
            <person name="Watanabe M."/>
            <person name="Hiraoka S."/>
            <person name="Chiba Y."/>
            <person name="Ishida S."/>
            <person name="Ono Y."/>
            <person name="Takiguchi S."/>
            <person name="Watanabe S."/>
            <person name="Yosida M."/>
            <person name="Hotuta T."/>
            <person name="Kusano J."/>
            <person name="Kanehori K."/>
            <person name="Takahashi-Fujii A."/>
            <person name="Hara H."/>
            <person name="Tanase T.-O."/>
            <person name="Nomura Y."/>
            <person name="Togiya S."/>
            <person name="Komai F."/>
            <person name="Hara R."/>
            <person name="Takeuchi K."/>
            <person name="Arita M."/>
            <person name="Imose N."/>
            <person name="Musashino K."/>
            <person name="Yuuki H."/>
            <person name="Oshima A."/>
            <person name="Sasaki N."/>
            <person name="Aotsuka S."/>
            <person name="Yoshikawa Y."/>
            <person name="Matsunawa H."/>
            <person name="Ichihara T."/>
            <person name="Shiohata N."/>
            <person name="Sano S."/>
            <person name="Moriya S."/>
            <person name="Momiyama H."/>
            <person name="Satoh N."/>
            <person name="Takami S."/>
            <person name="Terashima Y."/>
            <person name="Suzuki O."/>
            <person name="Nakagawa S."/>
            <person name="Senoh A."/>
            <person name="Mizoguchi H."/>
            <person name="Goto Y."/>
            <person name="Shimizu F."/>
            <person name="Wakebe H."/>
            <person name="Hishigaki H."/>
            <person name="Watanabe T."/>
            <person name="Sugiyama A."/>
            <person name="Takemoto M."/>
            <person name="Kawakami B."/>
            <person name="Yamazaki M."/>
            <person name="Watanabe K."/>
            <person name="Kumagai A."/>
            <person name="Itakura S."/>
            <person name="Fukuzumi Y."/>
            <person name="Fujimori Y."/>
            <person name="Komiyama M."/>
            <person name="Tashiro H."/>
            <person name="Tanigami A."/>
            <person name="Fujiwara T."/>
            <person name="Ono T."/>
            <person name="Yamada K."/>
            <person name="Fujii Y."/>
            <person name="Ozaki K."/>
            <person name="Hirao M."/>
            <person name="Ohmori Y."/>
            <person name="Kawabata A."/>
            <person name="Hikiji T."/>
            <person name="Kobatake N."/>
            <person name="Inagaki H."/>
            <person name="Ikema Y."/>
            <person name="Okamoto S."/>
            <person name="Okitani R."/>
            <person name="Kawakami T."/>
            <person name="Noguchi S."/>
            <person name="Itoh T."/>
            <person name="Shigeta K."/>
            <person name="Senba T."/>
            <person name="Matsumura K."/>
            <person name="Nakajima Y."/>
            <person name="Mizuno T."/>
            <person name="Morinaga M."/>
            <person name="Sasaki M."/>
            <person name="Togashi T."/>
            <person name="Oyama M."/>
            <person name="Hata H."/>
            <person name="Watanabe M."/>
            <person name="Komatsu T."/>
            <person name="Mizushima-Sugano J."/>
            <person name="Satoh T."/>
            <person name="Shirai Y."/>
            <person name="Takahashi Y."/>
            <person name="Nakagawa K."/>
            <person name="Okumura K."/>
            <person name="Nagase T."/>
            <person name="Nomura N."/>
            <person name="Kikuchi H."/>
            <person name="Masuho Y."/>
            <person name="Yamashita R."/>
            <person name="Nakai K."/>
            <person name="Yada T."/>
            <person name="Nakamura Y."/>
            <person name="Ohara O."/>
            <person name="Isogai T."/>
            <person name="Sugano S."/>
        </authorList>
    </citation>
    <scope>NUCLEOTIDE SEQUENCE [LARGE SCALE MRNA]</scope>
    <source>
        <tissue>Hippocampus</tissue>
    </source>
</reference>
<reference key="3">
    <citation type="journal article" date="2006" name="Nature">
        <title>The DNA sequence and biological annotation of human chromosome 1.</title>
        <authorList>
            <person name="Gregory S.G."/>
            <person name="Barlow K.F."/>
            <person name="McLay K.E."/>
            <person name="Kaul R."/>
            <person name="Swarbreck D."/>
            <person name="Dunham A."/>
            <person name="Scott C.E."/>
            <person name="Howe K.L."/>
            <person name="Woodfine K."/>
            <person name="Spencer C.C.A."/>
            <person name="Jones M.C."/>
            <person name="Gillson C."/>
            <person name="Searle S."/>
            <person name="Zhou Y."/>
            <person name="Kokocinski F."/>
            <person name="McDonald L."/>
            <person name="Evans R."/>
            <person name="Phillips K."/>
            <person name="Atkinson A."/>
            <person name="Cooper R."/>
            <person name="Jones C."/>
            <person name="Hall R.E."/>
            <person name="Andrews T.D."/>
            <person name="Lloyd C."/>
            <person name="Ainscough R."/>
            <person name="Almeida J.P."/>
            <person name="Ambrose K.D."/>
            <person name="Anderson F."/>
            <person name="Andrew R.W."/>
            <person name="Ashwell R.I.S."/>
            <person name="Aubin K."/>
            <person name="Babbage A.K."/>
            <person name="Bagguley C.L."/>
            <person name="Bailey J."/>
            <person name="Beasley H."/>
            <person name="Bethel G."/>
            <person name="Bird C.P."/>
            <person name="Bray-Allen S."/>
            <person name="Brown J.Y."/>
            <person name="Brown A.J."/>
            <person name="Buckley D."/>
            <person name="Burton J."/>
            <person name="Bye J."/>
            <person name="Carder C."/>
            <person name="Chapman J.C."/>
            <person name="Clark S.Y."/>
            <person name="Clarke G."/>
            <person name="Clee C."/>
            <person name="Cobley V."/>
            <person name="Collier R.E."/>
            <person name="Corby N."/>
            <person name="Coville G.J."/>
            <person name="Davies J."/>
            <person name="Deadman R."/>
            <person name="Dunn M."/>
            <person name="Earthrowl M."/>
            <person name="Ellington A.G."/>
            <person name="Errington H."/>
            <person name="Frankish A."/>
            <person name="Frankland J."/>
            <person name="French L."/>
            <person name="Garner P."/>
            <person name="Garnett J."/>
            <person name="Gay L."/>
            <person name="Ghori M.R.J."/>
            <person name="Gibson R."/>
            <person name="Gilby L.M."/>
            <person name="Gillett W."/>
            <person name="Glithero R.J."/>
            <person name="Grafham D.V."/>
            <person name="Griffiths C."/>
            <person name="Griffiths-Jones S."/>
            <person name="Grocock R."/>
            <person name="Hammond S."/>
            <person name="Harrison E.S.I."/>
            <person name="Hart E."/>
            <person name="Haugen E."/>
            <person name="Heath P.D."/>
            <person name="Holmes S."/>
            <person name="Holt K."/>
            <person name="Howden P.J."/>
            <person name="Hunt A.R."/>
            <person name="Hunt S.E."/>
            <person name="Hunter G."/>
            <person name="Isherwood J."/>
            <person name="James R."/>
            <person name="Johnson C."/>
            <person name="Johnson D."/>
            <person name="Joy A."/>
            <person name="Kay M."/>
            <person name="Kershaw J.K."/>
            <person name="Kibukawa M."/>
            <person name="Kimberley A.M."/>
            <person name="King A."/>
            <person name="Knights A.J."/>
            <person name="Lad H."/>
            <person name="Laird G."/>
            <person name="Lawlor S."/>
            <person name="Leongamornlert D.A."/>
            <person name="Lloyd D.M."/>
            <person name="Loveland J."/>
            <person name="Lovell J."/>
            <person name="Lush M.J."/>
            <person name="Lyne R."/>
            <person name="Martin S."/>
            <person name="Mashreghi-Mohammadi M."/>
            <person name="Matthews L."/>
            <person name="Matthews N.S.W."/>
            <person name="McLaren S."/>
            <person name="Milne S."/>
            <person name="Mistry S."/>
            <person name="Moore M.J.F."/>
            <person name="Nickerson T."/>
            <person name="O'Dell C.N."/>
            <person name="Oliver K."/>
            <person name="Palmeiri A."/>
            <person name="Palmer S.A."/>
            <person name="Parker A."/>
            <person name="Patel D."/>
            <person name="Pearce A.V."/>
            <person name="Peck A.I."/>
            <person name="Pelan S."/>
            <person name="Phelps K."/>
            <person name="Phillimore B.J."/>
            <person name="Plumb R."/>
            <person name="Rajan J."/>
            <person name="Raymond C."/>
            <person name="Rouse G."/>
            <person name="Saenphimmachak C."/>
            <person name="Sehra H.K."/>
            <person name="Sheridan E."/>
            <person name="Shownkeen R."/>
            <person name="Sims S."/>
            <person name="Skuce C.D."/>
            <person name="Smith M."/>
            <person name="Steward C."/>
            <person name="Subramanian S."/>
            <person name="Sycamore N."/>
            <person name="Tracey A."/>
            <person name="Tromans A."/>
            <person name="Van Helmond Z."/>
            <person name="Wall M."/>
            <person name="Wallis J.M."/>
            <person name="White S."/>
            <person name="Whitehead S.L."/>
            <person name="Wilkinson J.E."/>
            <person name="Willey D.L."/>
            <person name="Williams H."/>
            <person name="Wilming L."/>
            <person name="Wray P.W."/>
            <person name="Wu Z."/>
            <person name="Coulson A."/>
            <person name="Vaudin M."/>
            <person name="Sulston J.E."/>
            <person name="Durbin R.M."/>
            <person name="Hubbard T."/>
            <person name="Wooster R."/>
            <person name="Dunham I."/>
            <person name="Carter N.P."/>
            <person name="McVean G."/>
            <person name="Ross M.T."/>
            <person name="Harrow J."/>
            <person name="Olson M.V."/>
            <person name="Beck S."/>
            <person name="Rogers J."/>
            <person name="Bentley D.R."/>
        </authorList>
    </citation>
    <scope>NUCLEOTIDE SEQUENCE [LARGE SCALE GENOMIC DNA]</scope>
</reference>
<reference evidence="10" key="4">
    <citation type="journal article" date="2004" name="Genome Res.">
        <title>The status, quality, and expansion of the NIH full-length cDNA project: the Mammalian Gene Collection (MGC).</title>
        <authorList>
            <consortium name="The MGC Project Team"/>
        </authorList>
    </citation>
    <scope>NUCLEOTIDE SEQUENCE [LARGE SCALE MRNA]</scope>
    <source>
        <tissue evidence="10">Ovary</tissue>
    </source>
</reference>
<reference evidence="9 12" key="5">
    <citation type="journal article" date="1999" name="DNA Res.">
        <title>Characterization of cDNA clones selected by the GeneMark analysis from size-fractionated cDNA libraries from human brain.</title>
        <authorList>
            <person name="Hirosawa M."/>
            <person name="Nagase T."/>
            <person name="Ishikawa K."/>
            <person name="Kikuno R."/>
            <person name="Nomura N."/>
            <person name="Ohara O."/>
        </authorList>
    </citation>
    <scope>NUCLEOTIDE SEQUENCE [LARGE SCALE MRNA] OF 57-493</scope>
    <source>
        <tissue evidence="12">Brain</tissue>
    </source>
</reference>
<reference key="6">
    <citation type="journal article" date="2008" name="Proc. Natl. Acad. Sci. U.S.A.">
        <title>A quantitative atlas of mitotic phosphorylation.</title>
        <authorList>
            <person name="Dephoure N."/>
            <person name="Zhou C."/>
            <person name="Villen J."/>
            <person name="Beausoleil S.A."/>
            <person name="Bakalarski C.E."/>
            <person name="Elledge S.J."/>
            <person name="Gygi S.P."/>
        </authorList>
    </citation>
    <scope>PHOSPHORYLATION [LARGE SCALE ANALYSIS] AT SER-477</scope>
    <scope>IDENTIFICATION BY MASS SPECTROMETRY [LARGE SCALE ANALYSIS]</scope>
    <source>
        <tissue>Cervix carcinoma</tissue>
    </source>
</reference>
<gene>
    <name evidence="13" type="primary">AMIGO1</name>
    <name evidence="3" type="synonym">ALI2</name>
    <name evidence="8" type="synonym">AMIGO</name>
    <name evidence="12" type="synonym">KIAA1163</name>
</gene>
<keyword id="KW-0130">Cell adhesion</keyword>
<keyword id="KW-1003">Cell membrane</keyword>
<keyword id="KW-0966">Cell projection</keyword>
<keyword id="KW-0217">Developmental protein</keyword>
<keyword id="KW-0221">Differentiation</keyword>
<keyword id="KW-1015">Disulfide bond</keyword>
<keyword id="KW-0325">Glycoprotein</keyword>
<keyword id="KW-0393">Immunoglobulin domain</keyword>
<keyword id="KW-0433">Leucine-rich repeat</keyword>
<keyword id="KW-0472">Membrane</keyword>
<keyword id="KW-0524">Neurogenesis</keyword>
<keyword id="KW-0597">Phosphoprotein</keyword>
<keyword id="KW-1267">Proteomics identification</keyword>
<keyword id="KW-1185">Reference proteome</keyword>
<keyword id="KW-0677">Repeat</keyword>
<keyword id="KW-0732">Signal</keyword>
<keyword id="KW-0812">Transmembrane</keyword>
<keyword id="KW-1133">Transmembrane helix</keyword>